<comment type="function">
    <text evidence="1">Catalyzes the conversion of oxaloacetate (OAA) to phosphoenolpyruvate (PEP), the rate-limiting step in the metabolic pathway that produces glucose from lactate and other precursors derived from the citric acid cycle.</text>
</comment>
<comment type="catalytic activity">
    <reaction evidence="1">
        <text>oxaloacetate + GTP = phosphoenolpyruvate + GDP + CO2</text>
        <dbReference type="Rhea" id="RHEA:10388"/>
        <dbReference type="ChEBI" id="CHEBI:16452"/>
        <dbReference type="ChEBI" id="CHEBI:16526"/>
        <dbReference type="ChEBI" id="CHEBI:37565"/>
        <dbReference type="ChEBI" id="CHEBI:58189"/>
        <dbReference type="ChEBI" id="CHEBI:58702"/>
        <dbReference type="EC" id="4.1.1.32"/>
    </reaction>
</comment>
<comment type="cofactor">
    <cofactor evidence="1">
        <name>Mn(2+)</name>
        <dbReference type="ChEBI" id="CHEBI:29035"/>
    </cofactor>
    <text evidence="1">Binds 1 Mn(2+) ion per subunit.</text>
</comment>
<comment type="pathway">
    <text evidence="1">Carbohydrate biosynthesis; gluconeogenesis.</text>
</comment>
<comment type="subunit">
    <text evidence="1">Monomer.</text>
</comment>
<comment type="subcellular location">
    <subcellularLocation>
        <location evidence="1">Cytoplasm</location>
    </subcellularLocation>
</comment>
<comment type="similarity">
    <text evidence="1">Belongs to the phosphoenolpyruvate carboxykinase [GTP] family.</text>
</comment>
<organism>
    <name type="scientific">Chlamydia muridarum (strain MoPn / Nigg)</name>
    <dbReference type="NCBI Taxonomy" id="243161"/>
    <lineage>
        <taxon>Bacteria</taxon>
        <taxon>Pseudomonadati</taxon>
        <taxon>Chlamydiota</taxon>
        <taxon>Chlamydiia</taxon>
        <taxon>Chlamydiales</taxon>
        <taxon>Chlamydiaceae</taxon>
        <taxon>Chlamydia/Chlamydophila group</taxon>
        <taxon>Chlamydia</taxon>
    </lineage>
</organism>
<protein>
    <recommendedName>
        <fullName evidence="1">Phosphoenolpyruvate carboxykinase [GTP]</fullName>
        <shortName evidence="1">PEP carboxykinase</shortName>
        <shortName evidence="1">PEPCK</shortName>
        <ecNumber evidence="1">4.1.1.32</ecNumber>
    </recommendedName>
</protein>
<proteinExistence type="inferred from homology"/>
<accession>Q9PLL6</accession>
<gene>
    <name evidence="1" type="primary">pckG</name>
    <name type="ordered locus">TC_0083</name>
</gene>
<keyword id="KW-0963">Cytoplasm</keyword>
<keyword id="KW-0210">Decarboxylase</keyword>
<keyword id="KW-0312">Gluconeogenesis</keyword>
<keyword id="KW-0342">GTP-binding</keyword>
<keyword id="KW-0456">Lyase</keyword>
<keyword id="KW-0464">Manganese</keyword>
<keyword id="KW-0479">Metal-binding</keyword>
<keyword id="KW-0547">Nucleotide-binding</keyword>
<reference key="1">
    <citation type="journal article" date="2000" name="Nucleic Acids Res.">
        <title>Genome sequences of Chlamydia trachomatis MoPn and Chlamydia pneumoniae AR39.</title>
        <authorList>
            <person name="Read T.D."/>
            <person name="Brunham R.C."/>
            <person name="Shen C."/>
            <person name="Gill S.R."/>
            <person name="Heidelberg J.F."/>
            <person name="White O."/>
            <person name="Hickey E.K."/>
            <person name="Peterson J.D."/>
            <person name="Utterback T.R."/>
            <person name="Berry K.J."/>
            <person name="Bass S."/>
            <person name="Linher K.D."/>
            <person name="Weidman J.F."/>
            <person name="Khouri H.M."/>
            <person name="Craven B."/>
            <person name="Bowman C."/>
            <person name="Dodson R.J."/>
            <person name="Gwinn M.L."/>
            <person name="Nelson W.C."/>
            <person name="DeBoy R.T."/>
            <person name="Kolonay J.F."/>
            <person name="McClarty G."/>
            <person name="Salzberg S.L."/>
            <person name="Eisen J.A."/>
            <person name="Fraser C.M."/>
        </authorList>
    </citation>
    <scope>NUCLEOTIDE SEQUENCE [LARGE SCALE GENOMIC DNA]</scope>
    <source>
        <strain>MoPn / Nigg</strain>
    </source>
</reference>
<dbReference type="EC" id="4.1.1.32" evidence="1"/>
<dbReference type="EMBL" id="AE002160">
    <property type="protein sequence ID" value="AAF73531.1"/>
    <property type="molecule type" value="Genomic_DNA"/>
</dbReference>
<dbReference type="RefSeq" id="WP_010229325.1">
    <property type="nucleotide sequence ID" value="NZ_CP027217.1"/>
</dbReference>
<dbReference type="SMR" id="Q9PLL6"/>
<dbReference type="GeneID" id="1245613"/>
<dbReference type="KEGG" id="cmu:TC_0083"/>
<dbReference type="eggNOG" id="COG1274">
    <property type="taxonomic scope" value="Bacteria"/>
</dbReference>
<dbReference type="HOGENOM" id="CLU_028872_1_1_0"/>
<dbReference type="OrthoDB" id="9758871at2"/>
<dbReference type="UniPathway" id="UPA00138"/>
<dbReference type="Proteomes" id="UP000000800">
    <property type="component" value="Chromosome"/>
</dbReference>
<dbReference type="GO" id="GO:0005829">
    <property type="term" value="C:cytosol"/>
    <property type="evidence" value="ECO:0007669"/>
    <property type="project" value="TreeGrafter"/>
</dbReference>
<dbReference type="GO" id="GO:0005525">
    <property type="term" value="F:GTP binding"/>
    <property type="evidence" value="ECO:0007669"/>
    <property type="project" value="UniProtKB-UniRule"/>
</dbReference>
<dbReference type="GO" id="GO:0030145">
    <property type="term" value="F:manganese ion binding"/>
    <property type="evidence" value="ECO:0007669"/>
    <property type="project" value="UniProtKB-UniRule"/>
</dbReference>
<dbReference type="GO" id="GO:0004613">
    <property type="term" value="F:phosphoenolpyruvate carboxykinase (GTP) activity"/>
    <property type="evidence" value="ECO:0007669"/>
    <property type="project" value="UniProtKB-UniRule"/>
</dbReference>
<dbReference type="GO" id="GO:0071333">
    <property type="term" value="P:cellular response to glucose stimulus"/>
    <property type="evidence" value="ECO:0007669"/>
    <property type="project" value="TreeGrafter"/>
</dbReference>
<dbReference type="GO" id="GO:0006094">
    <property type="term" value="P:gluconeogenesis"/>
    <property type="evidence" value="ECO:0007669"/>
    <property type="project" value="UniProtKB-UniRule"/>
</dbReference>
<dbReference type="GO" id="GO:0046327">
    <property type="term" value="P:glycerol biosynthetic process from pyruvate"/>
    <property type="evidence" value="ECO:0007669"/>
    <property type="project" value="TreeGrafter"/>
</dbReference>
<dbReference type="GO" id="GO:0006107">
    <property type="term" value="P:oxaloacetate metabolic process"/>
    <property type="evidence" value="ECO:0007669"/>
    <property type="project" value="TreeGrafter"/>
</dbReference>
<dbReference type="GO" id="GO:0019543">
    <property type="term" value="P:propionate catabolic process"/>
    <property type="evidence" value="ECO:0007669"/>
    <property type="project" value="TreeGrafter"/>
</dbReference>
<dbReference type="GO" id="GO:0033993">
    <property type="term" value="P:response to lipid"/>
    <property type="evidence" value="ECO:0007669"/>
    <property type="project" value="TreeGrafter"/>
</dbReference>
<dbReference type="GO" id="GO:0042594">
    <property type="term" value="P:response to starvation"/>
    <property type="evidence" value="ECO:0007669"/>
    <property type="project" value="TreeGrafter"/>
</dbReference>
<dbReference type="CDD" id="cd00819">
    <property type="entry name" value="PEPCK_GTP"/>
    <property type="match status" value="1"/>
</dbReference>
<dbReference type="FunFam" id="3.40.449.10:FF:000003">
    <property type="entry name" value="Phosphoenolpyruvate carboxykinase, cytosolic [GTP]"/>
    <property type="match status" value="1"/>
</dbReference>
<dbReference type="Gene3D" id="3.90.228.20">
    <property type="match status" value="1"/>
</dbReference>
<dbReference type="Gene3D" id="3.40.449.10">
    <property type="entry name" value="Phosphoenolpyruvate Carboxykinase, domain 1"/>
    <property type="match status" value="1"/>
</dbReference>
<dbReference type="Gene3D" id="2.170.8.10">
    <property type="entry name" value="Phosphoenolpyruvate Carboxykinase, domain 2"/>
    <property type="match status" value="1"/>
</dbReference>
<dbReference type="HAMAP" id="MF_00452">
    <property type="entry name" value="PEPCK_GTP"/>
    <property type="match status" value="1"/>
</dbReference>
<dbReference type="InterPro" id="IPR018091">
    <property type="entry name" value="PEP_carboxykin_GTP_CS"/>
</dbReference>
<dbReference type="InterPro" id="IPR013035">
    <property type="entry name" value="PEP_carboxykinase_C"/>
</dbReference>
<dbReference type="InterPro" id="IPR008209">
    <property type="entry name" value="PEP_carboxykinase_GTP"/>
</dbReference>
<dbReference type="InterPro" id="IPR035077">
    <property type="entry name" value="PEP_carboxykinase_GTP_C"/>
</dbReference>
<dbReference type="InterPro" id="IPR035078">
    <property type="entry name" value="PEP_carboxykinase_GTP_N"/>
</dbReference>
<dbReference type="InterPro" id="IPR008210">
    <property type="entry name" value="PEP_carboxykinase_N"/>
</dbReference>
<dbReference type="NCBIfam" id="NF003253">
    <property type="entry name" value="PRK04210.1"/>
    <property type="match status" value="1"/>
</dbReference>
<dbReference type="PANTHER" id="PTHR11561">
    <property type="entry name" value="PHOSPHOENOLPYRUVATE CARBOXYKINASE"/>
    <property type="match status" value="1"/>
</dbReference>
<dbReference type="PANTHER" id="PTHR11561:SF0">
    <property type="entry name" value="PHOSPHOENOLPYRUVATE CARBOXYKINASE [GTP]-RELATED"/>
    <property type="match status" value="1"/>
</dbReference>
<dbReference type="Pfam" id="PF00821">
    <property type="entry name" value="PEPCK_GTP"/>
    <property type="match status" value="1"/>
</dbReference>
<dbReference type="Pfam" id="PF17297">
    <property type="entry name" value="PEPCK_N"/>
    <property type="match status" value="1"/>
</dbReference>
<dbReference type="PIRSF" id="PIRSF001348">
    <property type="entry name" value="PEP_carboxykinase_GTP"/>
    <property type="match status" value="1"/>
</dbReference>
<dbReference type="SUPFAM" id="SSF68923">
    <property type="entry name" value="PEP carboxykinase N-terminal domain"/>
    <property type="match status" value="1"/>
</dbReference>
<dbReference type="SUPFAM" id="SSF53795">
    <property type="entry name" value="PEP carboxykinase-like"/>
    <property type="match status" value="1"/>
</dbReference>
<dbReference type="PROSITE" id="PS00505">
    <property type="entry name" value="PEPCK_GTP"/>
    <property type="match status" value="1"/>
</dbReference>
<evidence type="ECO:0000255" key="1">
    <source>
        <dbReference type="HAMAP-Rule" id="MF_00452"/>
    </source>
</evidence>
<name>PCKG_CHLMU</name>
<sequence>MTGDWMSKITHSGLKSWIEEVIALVSPKDVRLCDGSEAEYQQLCQQMQEAGVMTLLNPELHPNCFLVRSSPDDVARVEQFTFICTKTKEEAGPTNNWRDPQEMRAELHELFQGCMQGRTLYIVPFCMGPLHSPFSLVGIEITDSPYVVCSMKIMTRMGASVLEMLGSSGTFYKCLHSVGKPLAPGEKDVAWPCNPGHMRIVHFQDDSSVMSFGSGYGGNALLGKKCVALRLASYLGHKQGWLAEHMLVIGVTNPEGRKKYFAAAFPSACGKTNLAMLMPKLPGWKVECIGDDIAWIRPGDDGRLYAVNPEFGFFGVAIGTSEKTNPNALATCHSDSIFTNVALTSDGDVWWEGKTATPPQGMIDWKGRNWTPGGEPAAHPNARFTAPLDHCPSLDPQWDSPQGVPLEAIIFGGRRTETIPLVYESLSWEHGVMMGAGMSSTTTAAIAGELGKLRHDPFAMLPFCGYNMAAYFEHWLSFAGKGLQLPRIFSVNWFRKDENGQFIWPGFSENLRVLEWIFRRTDGEDSIARRTPIGYLPTEEGLNTTGLNLSRDALQSLLAVDTQGWRAEVNNIREYCSIFGSDMPRQILEELSRIENELK</sequence>
<feature type="chain" id="PRO_0000103597" description="Phosphoenolpyruvate carboxykinase [GTP]">
    <location>
        <begin position="1"/>
        <end position="599"/>
    </location>
</feature>
<feature type="active site" evidence="1">
    <location>
        <position position="269"/>
    </location>
</feature>
<feature type="binding site" evidence="1">
    <location>
        <position position="76"/>
    </location>
    <ligand>
        <name>substrate</name>
    </ligand>
</feature>
<feature type="binding site" evidence="1">
    <location>
        <begin position="216"/>
        <end position="218"/>
    </location>
    <ligand>
        <name>substrate</name>
    </ligand>
</feature>
<feature type="binding site" evidence="1">
    <location>
        <position position="225"/>
    </location>
    <ligand>
        <name>Mn(2+)</name>
        <dbReference type="ChEBI" id="CHEBI:29035"/>
    </ligand>
</feature>
<feature type="binding site" evidence="1">
    <location>
        <position position="245"/>
    </location>
    <ligand>
        <name>Mn(2+)</name>
        <dbReference type="ChEBI" id="CHEBI:29035"/>
    </ligand>
</feature>
<feature type="binding site" evidence="1">
    <location>
        <position position="267"/>
    </location>
    <ligand>
        <name>substrate</name>
    </ligand>
</feature>
<feature type="binding site" evidence="1">
    <location>
        <begin position="268"/>
        <end position="273"/>
    </location>
    <ligand>
        <name>GTP</name>
        <dbReference type="ChEBI" id="CHEBI:37565"/>
    </ligand>
</feature>
<feature type="binding site" evidence="1">
    <location>
        <position position="292"/>
    </location>
    <ligand>
        <name>Mn(2+)</name>
        <dbReference type="ChEBI" id="CHEBI:29035"/>
    </ligand>
</feature>
<feature type="binding site" evidence="1">
    <location>
        <begin position="381"/>
        <end position="383"/>
    </location>
    <ligand>
        <name>substrate</name>
    </ligand>
</feature>
<feature type="binding site" evidence="1">
    <location>
        <position position="383"/>
    </location>
    <ligand>
        <name>GTP</name>
        <dbReference type="ChEBI" id="CHEBI:37565"/>
    </ligand>
</feature>
<feature type="binding site" evidence="1">
    <location>
        <position position="414"/>
    </location>
    <ligand>
        <name>GTP</name>
        <dbReference type="ChEBI" id="CHEBI:37565"/>
    </ligand>
</feature>
<feature type="binding site" evidence="1">
    <location>
        <begin position="507"/>
        <end position="510"/>
    </location>
    <ligand>
        <name>GTP</name>
        <dbReference type="ChEBI" id="CHEBI:37565"/>
    </ligand>
</feature>